<proteinExistence type="inferred from homology"/>
<name>RL5_STRAW</name>
<evidence type="ECO:0000255" key="1">
    <source>
        <dbReference type="HAMAP-Rule" id="MF_01333"/>
    </source>
</evidence>
<evidence type="ECO:0000305" key="2"/>
<keyword id="KW-1185">Reference proteome</keyword>
<keyword id="KW-0687">Ribonucleoprotein</keyword>
<keyword id="KW-0689">Ribosomal protein</keyword>
<keyword id="KW-0694">RNA-binding</keyword>
<keyword id="KW-0699">rRNA-binding</keyword>
<keyword id="KW-0820">tRNA-binding</keyword>
<organism>
    <name type="scientific">Streptomyces avermitilis (strain ATCC 31267 / DSM 46492 / JCM 5070 / NBRC 14893 / NCIMB 12804 / NRRL 8165 / MA-4680)</name>
    <dbReference type="NCBI Taxonomy" id="227882"/>
    <lineage>
        <taxon>Bacteria</taxon>
        <taxon>Bacillati</taxon>
        <taxon>Actinomycetota</taxon>
        <taxon>Actinomycetes</taxon>
        <taxon>Kitasatosporales</taxon>
        <taxon>Streptomycetaceae</taxon>
        <taxon>Streptomyces</taxon>
    </lineage>
</organism>
<gene>
    <name evidence="1" type="primary">rplE</name>
    <name type="ordered locus">SAV_4938</name>
</gene>
<feature type="chain" id="PRO_0000124998" description="Large ribosomal subunit protein uL5">
    <location>
        <begin position="1"/>
        <end position="185"/>
    </location>
</feature>
<sequence>MATTTTPRLKTKYREEIAGKLQEEFSYENVMQTPGLVKIVVNMGVGDAARDSKLIDGAIRDLTTITGQKPAVTKARKSIAQFKLREGQPIGAHVTLRGDRMWEFLDRTLSLALPRIRDFRGLSPKQFDGRGNYTFGLTEQVMFHEIDQDKIDRVRGMDITVVTTATNDAEGRALLRHLGFPFKEA</sequence>
<reference key="1">
    <citation type="journal article" date="2001" name="Proc. Natl. Acad. Sci. U.S.A.">
        <title>Genome sequence of an industrial microorganism Streptomyces avermitilis: deducing the ability of producing secondary metabolites.</title>
        <authorList>
            <person name="Omura S."/>
            <person name="Ikeda H."/>
            <person name="Ishikawa J."/>
            <person name="Hanamoto A."/>
            <person name="Takahashi C."/>
            <person name="Shinose M."/>
            <person name="Takahashi Y."/>
            <person name="Horikawa H."/>
            <person name="Nakazawa H."/>
            <person name="Osonoe T."/>
            <person name="Kikuchi H."/>
            <person name="Shiba T."/>
            <person name="Sakaki Y."/>
            <person name="Hattori M."/>
        </authorList>
    </citation>
    <scope>NUCLEOTIDE SEQUENCE [LARGE SCALE GENOMIC DNA]</scope>
    <source>
        <strain>ATCC 31267 / DSM 46492 / JCM 5070 / NBRC 14893 / NCIMB 12804 / NRRL 8165 / MA-4680</strain>
    </source>
</reference>
<reference key="2">
    <citation type="journal article" date="2003" name="Nat. Biotechnol.">
        <title>Complete genome sequence and comparative analysis of the industrial microorganism Streptomyces avermitilis.</title>
        <authorList>
            <person name="Ikeda H."/>
            <person name="Ishikawa J."/>
            <person name="Hanamoto A."/>
            <person name="Shinose M."/>
            <person name="Kikuchi H."/>
            <person name="Shiba T."/>
            <person name="Sakaki Y."/>
            <person name="Hattori M."/>
            <person name="Omura S."/>
        </authorList>
    </citation>
    <scope>NUCLEOTIDE SEQUENCE [LARGE SCALE GENOMIC DNA]</scope>
    <source>
        <strain>ATCC 31267 / DSM 46492 / JCM 5070 / NBRC 14893 / NCIMB 12804 / NRRL 8165 / MA-4680</strain>
    </source>
</reference>
<comment type="function">
    <text evidence="1">This is one of the proteins that bind and probably mediate the attachment of the 5S RNA into the large ribosomal subunit, where it forms part of the central protuberance. In the 70S ribosome it contacts protein S13 of the 30S subunit (bridge B1b), connecting the 2 subunits; this bridge is implicated in subunit movement. Contacts the P site tRNA; the 5S rRNA and some of its associated proteins might help stabilize positioning of ribosome-bound tRNAs.</text>
</comment>
<comment type="subunit">
    <text evidence="1">Part of the 50S ribosomal subunit; part of the 5S rRNA/L5/L18/L25 subcomplex. Contacts the 5S rRNA and the P site tRNA. Forms a bridge to the 30S subunit in the 70S ribosome.</text>
</comment>
<comment type="similarity">
    <text evidence="1">Belongs to the universal ribosomal protein uL5 family.</text>
</comment>
<protein>
    <recommendedName>
        <fullName evidence="1">Large ribosomal subunit protein uL5</fullName>
    </recommendedName>
    <alternativeName>
        <fullName evidence="2">50S ribosomal protein L5</fullName>
    </alternativeName>
</protein>
<accession>Q82DN3</accession>
<dbReference type="EMBL" id="BA000030">
    <property type="protein sequence ID" value="BAC72650.1"/>
    <property type="molecule type" value="Genomic_DNA"/>
</dbReference>
<dbReference type="RefSeq" id="WP_010986351.1">
    <property type="nucleotide sequence ID" value="NZ_JZJK01000077.1"/>
</dbReference>
<dbReference type="SMR" id="Q82DN3"/>
<dbReference type="GeneID" id="41542021"/>
<dbReference type="KEGG" id="sma:SAVERM_4938"/>
<dbReference type="eggNOG" id="COG0094">
    <property type="taxonomic scope" value="Bacteria"/>
</dbReference>
<dbReference type="HOGENOM" id="CLU_061015_2_1_11"/>
<dbReference type="OrthoDB" id="9806626at2"/>
<dbReference type="Proteomes" id="UP000000428">
    <property type="component" value="Chromosome"/>
</dbReference>
<dbReference type="GO" id="GO:1990904">
    <property type="term" value="C:ribonucleoprotein complex"/>
    <property type="evidence" value="ECO:0007669"/>
    <property type="project" value="UniProtKB-KW"/>
</dbReference>
<dbReference type="GO" id="GO:0005840">
    <property type="term" value="C:ribosome"/>
    <property type="evidence" value="ECO:0007669"/>
    <property type="project" value="UniProtKB-KW"/>
</dbReference>
<dbReference type="GO" id="GO:0019843">
    <property type="term" value="F:rRNA binding"/>
    <property type="evidence" value="ECO:0007669"/>
    <property type="project" value="UniProtKB-UniRule"/>
</dbReference>
<dbReference type="GO" id="GO:0003735">
    <property type="term" value="F:structural constituent of ribosome"/>
    <property type="evidence" value="ECO:0007669"/>
    <property type="project" value="InterPro"/>
</dbReference>
<dbReference type="GO" id="GO:0000049">
    <property type="term" value="F:tRNA binding"/>
    <property type="evidence" value="ECO:0007669"/>
    <property type="project" value="UniProtKB-UniRule"/>
</dbReference>
<dbReference type="GO" id="GO:0006412">
    <property type="term" value="P:translation"/>
    <property type="evidence" value="ECO:0007669"/>
    <property type="project" value="UniProtKB-UniRule"/>
</dbReference>
<dbReference type="FunFam" id="3.30.1440.10:FF:000001">
    <property type="entry name" value="50S ribosomal protein L5"/>
    <property type="match status" value="1"/>
</dbReference>
<dbReference type="Gene3D" id="3.30.1440.10">
    <property type="match status" value="1"/>
</dbReference>
<dbReference type="HAMAP" id="MF_01333_B">
    <property type="entry name" value="Ribosomal_uL5_B"/>
    <property type="match status" value="1"/>
</dbReference>
<dbReference type="InterPro" id="IPR002132">
    <property type="entry name" value="Ribosomal_uL5"/>
</dbReference>
<dbReference type="InterPro" id="IPR020930">
    <property type="entry name" value="Ribosomal_uL5_bac-type"/>
</dbReference>
<dbReference type="InterPro" id="IPR031309">
    <property type="entry name" value="Ribosomal_uL5_C"/>
</dbReference>
<dbReference type="InterPro" id="IPR020929">
    <property type="entry name" value="Ribosomal_uL5_CS"/>
</dbReference>
<dbReference type="InterPro" id="IPR022803">
    <property type="entry name" value="Ribosomal_uL5_dom_sf"/>
</dbReference>
<dbReference type="InterPro" id="IPR031310">
    <property type="entry name" value="Ribosomal_uL5_N"/>
</dbReference>
<dbReference type="NCBIfam" id="NF000585">
    <property type="entry name" value="PRK00010.1"/>
    <property type="match status" value="1"/>
</dbReference>
<dbReference type="PANTHER" id="PTHR11994">
    <property type="entry name" value="60S RIBOSOMAL PROTEIN L11-RELATED"/>
    <property type="match status" value="1"/>
</dbReference>
<dbReference type="Pfam" id="PF00281">
    <property type="entry name" value="Ribosomal_L5"/>
    <property type="match status" value="1"/>
</dbReference>
<dbReference type="Pfam" id="PF00673">
    <property type="entry name" value="Ribosomal_L5_C"/>
    <property type="match status" value="1"/>
</dbReference>
<dbReference type="PIRSF" id="PIRSF002161">
    <property type="entry name" value="Ribosomal_L5"/>
    <property type="match status" value="1"/>
</dbReference>
<dbReference type="SUPFAM" id="SSF55282">
    <property type="entry name" value="RL5-like"/>
    <property type="match status" value="1"/>
</dbReference>
<dbReference type="PROSITE" id="PS00358">
    <property type="entry name" value="RIBOSOMAL_L5"/>
    <property type="match status" value="1"/>
</dbReference>